<comment type="function">
    <molecule>Capsid protein</molecule>
    <text evidence="2 3 6">Forms an icosahedral capsid with a T=4 symmetry composed of 240 copies of the capsid protein surrounded by a lipid membrane through which penetrate 80 spikes composed of trimers of E1-E2 heterodimers (By similarity). The capsid protein binds to the viral RNA genome at a site adjacent to a ribosome binding site for viral genome translation following genome release (By similarity). Possesses a protease activity that results in its autocatalytic cleavage from the nascent structural protein (By similarity). Following its self-cleavage, the capsid protein transiently associates with ribosomes, and within several minutes the protein binds to viral RNA and rapidly assembles into icosahedric core particles (By similarity). The resulting nucleocapsid eventually associates with the cytoplasmic domain of the spike glycoprotein E2 at the cell membrane, leading to budding and formation of mature virions (By similarity). In case of infection, new virions attach to target cells and after clathrin-mediated endocytosis their membrane fuses with the host endosomal membrane (By similarity). This leads to the release of the nucleocapsid into the cytoplasm, followed by an uncoating event necessary for the genomic RNA to become accessible (By similarity). The uncoating might be triggered by the interaction of capsid proteins with ribosomes (By similarity). Binding of ribosomes would release the genomic RNA since the same region is genomic RNA-binding and ribosome-binding (By similarity). Specifically inhibits interleukin-1 receptor-associated kinase 1/IRAK1-dependent signaling during viral entry, representing a means by which the alphaviruses may evade innate immune detection and activation prior to viral gene expression (By similarity).</text>
</comment>
<comment type="function">
    <molecule>Assembly protein E3</molecule>
    <text evidence="2">Provides the signal sequence for the translocation of the precursor of protein E3/E2 to the host endoplasmic reticulum. Furin-cleaved E3 remains associated with spike glycoprotein E1 and mediates pH protection of the latter during the transport via the secretory pathway. After virion release from the host cell, the assembly protein E3 is gradually released in the extracellular space.</text>
</comment>
<comment type="function">
    <molecule>Spike glycoprotein E2</molecule>
    <text evidence="2 12">Plays a role in viral attachment to target host cell, by binding to the cell receptor MXRA8 (By similarity). Synthesized as a p62 precursor which is processed by furin at the cell membrane just before virion budding, giving rise to E2-E1 heterodimer. The p62-E1 heterodimer is stable, whereas E2-E1 is unstable and dissociate at low pH. p62 is processed at the last step, presumably to avoid E1 fusion activation before its final export to cell surface. E2 C-terminus contains a transitory transmembrane that would be disrupted by palmitoylation, resulting in reorientation of the C-terminal tail from lumenal to cytoplasmic side. This step is critical since E2 C-terminus is involved in budding by interacting with capsid proteins. This release of E2 C-terminus in cytoplasm occurs lately in protein export, and precludes premature assembly of particles at the endoplasmic reticulum membrane.</text>
</comment>
<comment type="function">
    <molecule>6K protein</molecule>
    <text evidence="2 3">Acts as a viroporin that participates in virus glycoprotein processing and transport to the plasma membrane, cell permeabilization and budding of viral particles (By similarity). Disrupts the calcium homeostasis of the cell, probably at the endoplasmic reticulum level (By similarity). This leads to cytoplasmic calcium elevation (By similarity). Because of its lipophilic properties, the 6K protein is postulated to influence the selection of lipids that interact with the transmembrane domains of the glycoproteins, which, in turn, affects the deformability of the bilayer required for the extreme curvature that occurs as budding proceeds. Present in low amount in virions, about 3% compared to viral glycoproteins (By similarity).</text>
</comment>
<comment type="function">
    <molecule>Spike glycoprotein E1</molecule>
    <text evidence="3">Class II viral fusion protein. Fusion activity is inactive as long as E1 is bound to E2 in mature virion. After virus attachment to target cell and endocytosis, acidification of the endosome induce dissociation of E1/E2 heterodimer and concomitant trimerization of the E1 subunits. This E1 trimer is fusion active, and promotes release of viral nucleocapsid in cytoplasm after endosome and viral membrane fusion. Efficient fusion requires the presence of cholesterol and sphingolipid in the target membrane.</text>
</comment>
<comment type="catalytic activity">
    <reaction evidence="2">
        <text>Autocatalytic release of the core protein from the N-terminus of the togavirus structural polyprotein by hydrolysis of a -Trp-|-Ser- bond.</text>
        <dbReference type="EC" id="3.4.21.90"/>
    </reaction>
</comment>
<comment type="subunit">
    <molecule>Capsid protein</molecule>
    <text evidence="3 10 11">Homodimer (By similarity). Homomultimer (By similarity). Interacts with host karyopherin KPNA4; this interaction allows the nuclear import of the viral capsid protein (By similarity). Interacts with spike glycoprotein E2 (By similarity). Interacts with host IRAK1; the interaction leads to inhibition of IRAK1-dependent signaling (By similarity).</text>
</comment>
<comment type="subunit">
    <molecule>Precursor of protein E3/E2</molecule>
    <text evidence="2 3 5 11">The precursor of protein E3/E2 and E1 form a heterodimer shortly after synthesis (By similarity).</text>
</comment>
<comment type="subunit">
    <molecule>Spike glycoprotein E1</molecule>
    <text evidence="2 3 11">The precursor of protein E3/E2 and E1 form a heterodimer shortly after synthesis (By similarity). Processing of the precursor of protein E3/E2 into E2 and E3 results in a heterodimer of the spike glycoproteins E2 and E1 (By similarity). Spike at virion surface are constituted of a trimer of E2-E1 heterodimers (By similarity). After target cell attachment and endocytosis, E1 change conformation to form homotrimers (By similarity). Interacts with 6K protein (By similarity).</text>
</comment>
<comment type="subunit">
    <molecule>Spike glycoprotein E2</molecule>
    <text evidence="3 12">Interacts with spike glycoprotein E1 (By similarity). Processing of the precursor of protein E3/E2 into E2 and E3 results in a heterodimer of the spike glycoproteins E2 and E1 (By similarity). Spike at virion surface are constituted of a trimer of E2-E1 heterodimers (By similarity). Interacts with 6K protein (By similarity). Interacts with host MXRA8; this interaction mediates virus entry (By similarity).</text>
</comment>
<comment type="subunit">
    <molecule>6K protein</molecule>
    <text evidence="3 8">Oligomer (By similarity). Interacts with spike glycoprotein E1. Interacts with spike glycoprotein E2 (By similarity).</text>
</comment>
<comment type="subcellular location">
    <molecule>Capsid protein</molecule>
    <subcellularLocation>
        <location evidence="3">Virion</location>
    </subcellularLocation>
    <subcellularLocation>
        <location evidence="11">Host cytoplasm</location>
    </subcellularLocation>
    <subcellularLocation>
        <location evidence="3">Host cell membrane</location>
    </subcellularLocation>
    <subcellularLocation>
        <location evidence="11">Host nucleus</location>
    </subcellularLocation>
    <text evidence="11">Shuttles between the cytoplasm and the nucleus.</text>
</comment>
<comment type="subcellular location">
    <molecule>Spike glycoprotein E2</molecule>
    <subcellularLocation>
        <location evidence="11">Virion membrane</location>
        <topology evidence="13">Single-pass type I membrane protein</topology>
    </subcellularLocation>
    <subcellularLocation>
        <location evidence="3">Host cell membrane</location>
        <topology evidence="11">Single-pass type I membrane protein</topology>
    </subcellularLocation>
</comment>
<comment type="subcellular location">
    <molecule>6K protein</molecule>
    <subcellularLocation>
        <location evidence="3">Host cell membrane</location>
        <topology evidence="13">Multi-pass membrane protein</topology>
    </subcellularLocation>
    <subcellularLocation>
        <location evidence="3">Virion membrane</location>
        <topology evidence="13">Multi-pass membrane protein</topology>
    </subcellularLocation>
    <subcellularLocation>
        <location evidence="3">Host Golgi apparatus</location>
    </subcellularLocation>
    <subcellularLocation>
        <location>Host Golgi apparatus</location>
        <location>Host trans-Golgi network</location>
    </subcellularLocation>
    <subcellularLocation>
        <location evidence="3">Host endoplasmic reticulum</location>
    </subcellularLocation>
</comment>
<comment type="subcellular location">
    <molecule>Spike glycoprotein E1</molecule>
    <subcellularLocation>
        <location evidence="11">Virion membrane</location>
        <topology evidence="13">Single-pass type I membrane protein</topology>
    </subcellularLocation>
    <subcellularLocation>
        <location evidence="3 11">Host cell membrane</location>
        <topology evidence="13">Single-pass type I membrane protein</topology>
    </subcellularLocation>
</comment>
<comment type="domain">
    <molecule>Capsid protein</molecule>
    <text evidence="3 4">The very N-terminus also plays a role in the particle assembly process (By similarity). The N-terminus also contains a nuclear localization signal and a supra nuclear export signal (supraNES), which is an unusually strong NES that mediates host CRM1 binding in the absence of RanGTP and thus can bind CRM1, not only in the nucleus, but also in the cytoplasm (By similarity). The C-terminus functions as a protease during translation to cleave itself from the translating structural polyprotein (By similarity).</text>
</comment>
<comment type="domain">
    <text evidence="2">Structural polyprotein: As soon as the capsid protein has been autocleaved, an internal uncleaved signal peptide directs the remaining polyprotein to the endoplasmic reticulum.</text>
</comment>
<comment type="PTM">
    <text evidence="2">Structural polyprotein: Specific enzymatic cleavages in vivo yield mature proteins. Capsid protein is auto-cleaved during polyprotein translation, unmasking a signal peptide at the N-terminus of the precursor of E3/E2 (By similarity). The remaining polyprotein is then targeted to the host endoplasmic reticulum, where host signal peptidase cleaves it into pE2, 6K and E1 proteins. pE2 is further processed to mature E3 and E2 by host furin in trans-Golgi vesicle (By similarity).</text>
</comment>
<comment type="PTM">
    <molecule>Spike glycoprotein E2</molecule>
    <text evidence="2">Palmitoylated via thioester bonds. These palmitoylations may induce disruption of the C-terminus transmembrane. This would result in the reorientation of E2 C-terminus from lumenal to cytoplasmic side.</text>
</comment>
<comment type="PTM">
    <molecule>Spike glycoprotein E1</molecule>
    <text evidence="2">N-glycosylated.</text>
</comment>
<comment type="PTM">
    <molecule>Spike glycoprotein E2</molecule>
    <text evidence="2">N-glycosylated.</text>
</comment>
<comment type="PTM">
    <molecule>Assembly protein E3</molecule>
    <text evidence="2">N-glycosylated.</text>
</comment>
<comment type="PTM">
    <molecule>6K protein</molecule>
    <text evidence="2">Palmitoylated via thioester bonds.</text>
</comment>
<comment type="miscellaneous">
    <text evidence="16">Belongs to the Old World alphaviruses that usually cause fever, maculopapular rash, arthralgia and myalgia.</text>
</comment>
<comment type="miscellaneous">
    <text evidence="10">Structural polyprotein: Translated from a subgenomic RNA synthesized during togavirus replication.</text>
</comment>
<protein>
    <recommendedName>
        <fullName>Structural polyprotein</fullName>
    </recommendedName>
    <alternativeName>
        <fullName>p130</fullName>
    </alternativeName>
    <component>
        <recommendedName>
            <fullName>Capsid protein</fullName>
            <ecNumber evidence="2">3.4.21.90</ecNumber>
        </recommendedName>
        <alternativeName>
            <fullName>Coat protein</fullName>
            <shortName>C</shortName>
        </alternativeName>
    </component>
    <component>
        <recommendedName>
            <fullName>Precursor of protein E3/E2</fullName>
        </recommendedName>
        <alternativeName>
            <fullName>p62</fullName>
        </alternativeName>
        <alternativeName>
            <fullName>pE2</fullName>
        </alternativeName>
    </component>
    <component>
        <recommendedName>
            <fullName>Assembly protein E3</fullName>
        </recommendedName>
    </component>
    <component>
        <recommendedName>
            <fullName>Spike glycoprotein E2</fullName>
        </recommendedName>
        <alternativeName>
            <fullName>E2 envelope glycoprotein</fullName>
        </alternativeName>
    </component>
    <component>
        <recommendedName>
            <fullName>6K protein</fullName>
        </recommendedName>
    </component>
    <component>
        <recommendedName>
            <fullName>Spike glycoprotein E1</fullName>
        </recommendedName>
        <alternativeName>
            <fullName>E1 envelope glycoprotein</fullName>
        </alternativeName>
    </component>
</protein>
<evidence type="ECO:0000250" key="1"/>
<evidence type="ECO:0000250" key="2">
    <source>
        <dbReference type="UniProtKB" id="P03315"/>
    </source>
</evidence>
<evidence type="ECO:0000250" key="3">
    <source>
        <dbReference type="UniProtKB" id="P03316"/>
    </source>
</evidence>
<evidence type="ECO:0000250" key="4">
    <source>
        <dbReference type="UniProtKB" id="P09592"/>
    </source>
</evidence>
<evidence type="ECO:0000250" key="5">
    <source>
        <dbReference type="UniProtKB" id="P0DOK1"/>
    </source>
</evidence>
<evidence type="ECO:0000250" key="6">
    <source>
        <dbReference type="UniProtKB" id="P27284"/>
    </source>
</evidence>
<evidence type="ECO:0000250" key="7">
    <source>
        <dbReference type="UniProtKB" id="P89946"/>
    </source>
</evidence>
<evidence type="ECO:0000250" key="8">
    <source>
        <dbReference type="UniProtKB" id="Q5XXP3"/>
    </source>
</evidence>
<evidence type="ECO:0000250" key="9">
    <source>
        <dbReference type="UniProtKB" id="Q5Y388"/>
    </source>
</evidence>
<evidence type="ECO:0000250" key="10">
    <source>
        <dbReference type="UniProtKB" id="Q86925"/>
    </source>
</evidence>
<evidence type="ECO:0000250" key="11">
    <source>
        <dbReference type="UniProtKB" id="Q8JUX5"/>
    </source>
</evidence>
<evidence type="ECO:0000250" key="12">
    <source>
        <dbReference type="UniProtKB" id="Q8QZ72"/>
    </source>
</evidence>
<evidence type="ECO:0000255" key="13"/>
<evidence type="ECO:0000255" key="14">
    <source>
        <dbReference type="PROSITE-ProRule" id="PRU01027"/>
    </source>
</evidence>
<evidence type="ECO:0000256" key="15">
    <source>
        <dbReference type="SAM" id="MobiDB-lite"/>
    </source>
</evidence>
<evidence type="ECO:0000305" key="16"/>
<name>POLS_MIDDV</name>
<sequence length="1258" mass="138236">MNYIPTQTFYGRRWRPRPAARPWVAPPPVYYPPPPPVPVDPQAQQMQQLIAAVNTLAIRQNGTRTPGQQRRKRQPNKPKRKQTPPKKQNPAKTKNKQKPQPPKPKKRKPGKRERKCMKIENDCIFEVKLEGKVTGYACLVGDKVMKPAHVKGVIDNPDLAKLAFKKSSKYDLECAQIPVHMKSDASQFTHEKPEGHYNWHHGAVQYLNGRFTIPTGAGKPGDSGRPIFDNKGRVVAIVLGGANEGARTALSVVTWNKDMVTRITPEGTEEWTALVTTACILSNLTFDCSLPPCAPCCYEKDAEGTLRMLEDNVDNPGYYDLLAASTHCDAPQRRRRRGLTEDYKAYKLTKPYIAYCSDCGNGQFCYSPIAIERVRAEASDGMLKIQISAQIGLQVDGAHSWTKIRYMKGHDVEDTDRNSLEVFTTGECTVHGTMGHFIVATCPEGDSLTVAFVDKHKVRHACRIAYKHRVPVLGREHFTVRPHHGVELPCTTYAMRTSVTTEEIEMHVAHDVPDNTFLSKTGNKVKITPKGKSIRYNCTCGSKESGVTKQDKEFDNCEVSQCHTMVTAHDKWQFNSPYVPRAGSGKKGKIHVPFPLSNSTCRVPLAPLPNTIPAKNGITLQLHPVAPTLLTYRTLGEKPEHHTEWISESCERTLPVPEEGLEYTWGNHAPVRLWAQLTTKGSAHGMPHEIFSYYYGLYPATTVAVCVGLACVILLALSASCCLCVSARNKCLTPYALTPGAVVPCTLSLLCCAPRAKAATFAETAAYLWAENQTVFWMQFAIPVACFMIVTYCLRHLMLCCRTASFLVAVSLGMGATQAYEHSVTLPNAVGFPYRAHVDRPGFSPLTLHMEVVSTSLEPTLALDYVTCEYKTVVPSPKVTCCGMSECAHQQKADFQCKVYTGVYPFLWGGAYCFCDSENTQLSEAYVERSEVCKHDHAAAYRAHTAALKAKISVTYGSTNGTAEAFVNGESTARIGDLKMILGPISTAWSPFDPKIVVYKDEVYNQDYPPYGSGQPGRFGDLQSRTTESNDVYANTALKLARPSAGTVHVPYTQTPSGFKYWLKEKGDALNHKAPFGCIIKTNPVRAENCAVGNIPVSLDIPDAAFTRIVDAPSLTGLKCEVATCTHSSDFGGTLVVEYKTDKVGTCAVHSESNTAVMQETSLSVTMDGRGTLHFSTASASPSFVLKVCSSKTTCTAKCVPPKDHVVPFPANHNNVVFPDFSSTAVSWLTHTMGGATVVIAIGITIFLIVTCIAFSRH</sequence>
<keyword id="KW-0167">Capsid protein</keyword>
<keyword id="KW-0165">Cleavage on pair of basic residues</keyword>
<keyword id="KW-1015">Disulfide bond</keyword>
<keyword id="KW-1170">Fusion of virus membrane with host endosomal membrane</keyword>
<keyword id="KW-1168">Fusion of virus membrane with host membrane</keyword>
<keyword id="KW-0325">Glycoprotein</keyword>
<keyword id="KW-1032">Host cell membrane</keyword>
<keyword id="KW-1035">Host cytoplasm</keyword>
<keyword id="KW-1038">Host endoplasmic reticulum</keyword>
<keyword id="KW-1040">Host Golgi apparatus</keyword>
<keyword id="KW-1043">Host membrane</keyword>
<keyword id="KW-1048">Host nucleus</keyword>
<keyword id="KW-0945">Host-virus interaction</keyword>
<keyword id="KW-0378">Hydrolase</keyword>
<keyword id="KW-0407">Ion channel</keyword>
<keyword id="KW-0406">Ion transport</keyword>
<keyword id="KW-0449">Lipoprotein</keyword>
<keyword id="KW-0472">Membrane</keyword>
<keyword id="KW-0564">Palmitate</keyword>
<keyword id="KW-0645">Protease</keyword>
<keyword id="KW-0694">RNA-binding</keyword>
<keyword id="KW-0720">Serine protease</keyword>
<keyword id="KW-1144">T=4 icosahedral capsid protein</keyword>
<keyword id="KW-0812">Transmembrane</keyword>
<keyword id="KW-1133">Transmembrane helix</keyword>
<keyword id="KW-0813">Transport</keyword>
<keyword id="KW-1161">Viral attachment to host cell</keyword>
<keyword id="KW-1234">Viral attachment to host entry receptor</keyword>
<keyword id="KW-1182">Viral ion channel</keyword>
<keyword id="KW-1162">Viral penetration into host cytoplasm</keyword>
<keyword id="KW-0946">Virion</keyword>
<keyword id="KW-1160">Virus entry into host cell</keyword>
<reference key="1">
    <citation type="submission" date="2001-01" db="EMBL/GenBank/DDBJ databases">
        <title>Nucleotide sequence analyses of the 26S mRNAs of viruses of the genus Alphavirus.</title>
        <authorList>
            <person name="Kinney R.M."/>
            <person name="Pfeffer M."/>
        </authorList>
    </citation>
    <scope>NUCLEOTIDE SEQUENCE</scope>
</reference>
<organism>
    <name type="scientific">Middelburg virus</name>
    <dbReference type="NCBI Taxonomy" id="11023"/>
    <lineage>
        <taxon>Viruses</taxon>
        <taxon>Riboviria</taxon>
        <taxon>Orthornavirae</taxon>
        <taxon>Kitrinoviricota</taxon>
        <taxon>Alsuviricetes</taxon>
        <taxon>Martellivirales</taxon>
        <taxon>Togaviridae</taxon>
        <taxon>Alphavirus</taxon>
    </lineage>
</organism>
<organismHost>
    <name type="scientific">Aedes</name>
    <dbReference type="NCBI Taxonomy" id="7158"/>
</organismHost>
<organismHost>
    <name type="scientific">Mansonia</name>
    <dbReference type="NCBI Taxonomy" id="149459"/>
</organismHost>
<organismHost>
    <name type="scientific">Ovis aries</name>
    <name type="common">Sheep</name>
    <dbReference type="NCBI Taxonomy" id="9940"/>
</organismHost>
<dbReference type="EC" id="3.4.21.90" evidence="2"/>
<dbReference type="EMBL" id="AF339486">
    <property type="protein sequence ID" value="AAO33343.1"/>
    <property type="molecule type" value="Genomic_RNA"/>
</dbReference>
<dbReference type="SMR" id="Q80S27"/>
<dbReference type="MEROPS" id="S03.001"/>
<dbReference type="GO" id="GO:0030430">
    <property type="term" value="C:host cell cytoplasm"/>
    <property type="evidence" value="ECO:0007669"/>
    <property type="project" value="UniProtKB-SubCell"/>
</dbReference>
<dbReference type="GO" id="GO:0042025">
    <property type="term" value="C:host cell nucleus"/>
    <property type="evidence" value="ECO:0007669"/>
    <property type="project" value="UniProtKB-SubCell"/>
</dbReference>
<dbReference type="GO" id="GO:0020002">
    <property type="term" value="C:host cell plasma membrane"/>
    <property type="evidence" value="ECO:0007669"/>
    <property type="project" value="UniProtKB-SubCell"/>
</dbReference>
<dbReference type="GO" id="GO:0016020">
    <property type="term" value="C:membrane"/>
    <property type="evidence" value="ECO:0007669"/>
    <property type="project" value="UniProtKB-KW"/>
</dbReference>
<dbReference type="GO" id="GO:0039619">
    <property type="term" value="C:T=4 icosahedral viral capsid"/>
    <property type="evidence" value="ECO:0007669"/>
    <property type="project" value="UniProtKB-KW"/>
</dbReference>
<dbReference type="GO" id="GO:0055036">
    <property type="term" value="C:virion membrane"/>
    <property type="evidence" value="ECO:0007669"/>
    <property type="project" value="UniProtKB-SubCell"/>
</dbReference>
<dbReference type="GO" id="GO:0003723">
    <property type="term" value="F:RNA binding"/>
    <property type="evidence" value="ECO:0007669"/>
    <property type="project" value="UniProtKB-KW"/>
</dbReference>
<dbReference type="GO" id="GO:0004252">
    <property type="term" value="F:serine-type endopeptidase activity"/>
    <property type="evidence" value="ECO:0007669"/>
    <property type="project" value="InterPro"/>
</dbReference>
<dbReference type="GO" id="GO:0005198">
    <property type="term" value="F:structural molecule activity"/>
    <property type="evidence" value="ECO:0007669"/>
    <property type="project" value="InterPro"/>
</dbReference>
<dbReference type="GO" id="GO:0039654">
    <property type="term" value="P:fusion of virus membrane with host endosome membrane"/>
    <property type="evidence" value="ECO:0007669"/>
    <property type="project" value="UniProtKB-KW"/>
</dbReference>
<dbReference type="GO" id="GO:0006508">
    <property type="term" value="P:proteolysis"/>
    <property type="evidence" value="ECO:0007669"/>
    <property type="project" value="UniProtKB-KW"/>
</dbReference>
<dbReference type="GO" id="GO:0046718">
    <property type="term" value="P:symbiont entry into host cell"/>
    <property type="evidence" value="ECO:0007669"/>
    <property type="project" value="UniProtKB-KW"/>
</dbReference>
<dbReference type="GO" id="GO:0039722">
    <property type="term" value="P:symbiont-mediated suppression of host toll-like receptor signaling pathway"/>
    <property type="evidence" value="ECO:0000250"/>
    <property type="project" value="UniProtKB"/>
</dbReference>
<dbReference type="GO" id="GO:0019062">
    <property type="term" value="P:virion attachment to host cell"/>
    <property type="evidence" value="ECO:0007669"/>
    <property type="project" value="UniProtKB-KW"/>
</dbReference>
<dbReference type="FunFam" id="2.40.10.10:FF:000076">
    <property type="entry name" value="Structural polyprotein"/>
    <property type="match status" value="1"/>
</dbReference>
<dbReference type="FunFam" id="2.60.98.10:FF:000002">
    <property type="entry name" value="Structural polyprotein"/>
    <property type="match status" value="1"/>
</dbReference>
<dbReference type="Gene3D" id="1.10.287.2230">
    <property type="match status" value="1"/>
</dbReference>
<dbReference type="Gene3D" id="2.60.40.350">
    <property type="match status" value="1"/>
</dbReference>
<dbReference type="Gene3D" id="2.60.40.3200">
    <property type="entry name" value="Alphavirus E2 glycoprotein, A domain"/>
    <property type="match status" value="1"/>
</dbReference>
<dbReference type="Gene3D" id="2.60.40.4310">
    <property type="entry name" value="Alphavirus E2 glycoprotein, domain B"/>
    <property type="match status" value="1"/>
</dbReference>
<dbReference type="Gene3D" id="2.60.40.2400">
    <property type="entry name" value="Alphavirus E2 glycoprotein, domain C"/>
    <property type="match status" value="1"/>
</dbReference>
<dbReference type="Gene3D" id="2.60.98.10">
    <property type="entry name" value="Tick-borne Encephalitis virus Glycoprotein, domain 1"/>
    <property type="match status" value="3"/>
</dbReference>
<dbReference type="Gene3D" id="2.40.10.10">
    <property type="entry name" value="Trypsin-like serine proteases"/>
    <property type="match status" value="2"/>
</dbReference>
<dbReference type="InterPro" id="IPR002548">
    <property type="entry name" value="Alpha_E1_glycop"/>
</dbReference>
<dbReference type="InterPro" id="IPR000936">
    <property type="entry name" value="Alpha_E2_glycop"/>
</dbReference>
<dbReference type="InterPro" id="IPR002533">
    <property type="entry name" value="Alpha_E3_glycop"/>
</dbReference>
<dbReference type="InterPro" id="IPR042304">
    <property type="entry name" value="Alphavir_E2_A"/>
</dbReference>
<dbReference type="InterPro" id="IPR042305">
    <property type="entry name" value="Alphavir_E2_B"/>
</dbReference>
<dbReference type="InterPro" id="IPR042306">
    <property type="entry name" value="Alphavir_E2_C"/>
</dbReference>
<dbReference type="InterPro" id="IPR000336">
    <property type="entry name" value="Flavivir/Alphavir_Ig-like_sf"/>
</dbReference>
<dbReference type="InterPro" id="IPR036253">
    <property type="entry name" value="Glycoprot_cen/dimer_sf"/>
</dbReference>
<dbReference type="InterPro" id="IPR038055">
    <property type="entry name" value="Glycoprot_E_dimer_dom"/>
</dbReference>
<dbReference type="InterPro" id="IPR014756">
    <property type="entry name" value="Ig_E-set"/>
</dbReference>
<dbReference type="InterPro" id="IPR009003">
    <property type="entry name" value="Peptidase_S1_PA"/>
</dbReference>
<dbReference type="InterPro" id="IPR043504">
    <property type="entry name" value="Peptidase_S1_PA_chymotrypsin"/>
</dbReference>
<dbReference type="InterPro" id="IPR000930">
    <property type="entry name" value="Peptidase_S3"/>
</dbReference>
<dbReference type="Pfam" id="PF01589">
    <property type="entry name" value="Alpha_E1_glycop"/>
    <property type="match status" value="1"/>
</dbReference>
<dbReference type="Pfam" id="PF00943">
    <property type="entry name" value="Alpha_E2_glycop"/>
    <property type="match status" value="1"/>
</dbReference>
<dbReference type="Pfam" id="PF01563">
    <property type="entry name" value="Alpha_E3_glycop"/>
    <property type="match status" value="1"/>
</dbReference>
<dbReference type="Pfam" id="PF00944">
    <property type="entry name" value="Peptidase_S3"/>
    <property type="match status" value="1"/>
</dbReference>
<dbReference type="PRINTS" id="PR00798">
    <property type="entry name" value="TOGAVIRIN"/>
</dbReference>
<dbReference type="SUPFAM" id="SSF81296">
    <property type="entry name" value="E set domains"/>
    <property type="match status" value="1"/>
</dbReference>
<dbReference type="SUPFAM" id="SSF50494">
    <property type="entry name" value="Trypsin-like serine proteases"/>
    <property type="match status" value="1"/>
</dbReference>
<dbReference type="SUPFAM" id="SSF56983">
    <property type="entry name" value="Viral glycoprotein, central and dimerisation domains"/>
    <property type="match status" value="1"/>
</dbReference>
<dbReference type="PROSITE" id="PS51690">
    <property type="entry name" value="ALPHAVIRUS_CP"/>
    <property type="match status" value="1"/>
</dbReference>
<accession>Q80S27</accession>
<feature type="chain" id="PRO_0000238748" description="Capsid protein" evidence="1">
    <location>
        <begin position="1"/>
        <end position="271"/>
    </location>
</feature>
<feature type="chain" id="PRO_0000238749" description="Precursor of protein E3/E2" evidence="1">
    <location>
        <begin position="272"/>
        <end position="758"/>
    </location>
</feature>
<feature type="chain" id="PRO_0000238750" description="Assembly protein E3" evidence="1">
    <location>
        <begin position="272"/>
        <end position="337"/>
    </location>
</feature>
<feature type="chain" id="PRO_0000238751" description="Spike glycoprotein E2" evidence="1">
    <location>
        <begin position="338"/>
        <end position="758"/>
    </location>
</feature>
<feature type="chain" id="PRO_0000238752" description="6K protein" evidence="1">
    <location>
        <begin position="759"/>
        <end position="819"/>
    </location>
</feature>
<feature type="chain" id="PRO_0000238753" description="Spike glycoprotein E1" evidence="1">
    <location>
        <begin position="820"/>
        <end position="1258"/>
    </location>
</feature>
<feature type="topological domain" description="Extracellular" evidence="13">
    <location>
        <begin position="338"/>
        <end position="696"/>
    </location>
</feature>
<feature type="transmembrane region" description="Helical" evidence="13">
    <location>
        <begin position="697"/>
        <end position="717"/>
    </location>
</feature>
<feature type="topological domain" description="Cytoplasmic" evidence="13">
    <location>
        <begin position="718"/>
        <end position="758"/>
    </location>
</feature>
<feature type="topological domain" description="Extracellular" evidence="13">
    <location>
        <begin position="759"/>
        <end position="773"/>
    </location>
</feature>
<feature type="transmembrane region" description="Helical" evidence="13">
    <location>
        <begin position="774"/>
        <end position="794"/>
    </location>
</feature>
<feature type="topological domain" description="Cytoplasmic" evidence="13">
    <location>
        <begin position="795"/>
        <end position="796"/>
    </location>
</feature>
<feature type="transmembrane region" description="Helical" evidence="13">
    <location>
        <begin position="797"/>
        <end position="817"/>
    </location>
</feature>
<feature type="topological domain" description="Extracellular" evidence="13">
    <location>
        <begin position="818"/>
        <end position="819"/>
    </location>
</feature>
<feature type="topological domain" description="Extracellular" evidence="13">
    <location>
        <begin position="820"/>
        <end position="1234"/>
    </location>
</feature>
<feature type="transmembrane region" description="Helical" evidence="13">
    <location>
        <begin position="1235"/>
        <end position="1255"/>
    </location>
</feature>
<feature type="topological domain" description="Cytoplasmic" evidence="13">
    <location>
        <begin position="1256"/>
        <end position="1258"/>
    </location>
</feature>
<feature type="domain" description="Peptidase S3" evidence="14">
    <location>
        <begin position="123"/>
        <end position="271"/>
    </location>
</feature>
<feature type="region of interest" description="Host transcription inhibition" evidence="4">
    <location>
        <begin position="41"/>
        <end position="75"/>
    </location>
</feature>
<feature type="region of interest" description="Disordered" evidence="15">
    <location>
        <begin position="59"/>
        <end position="114"/>
    </location>
</feature>
<feature type="region of interest" description="Binding to the viral RNA" evidence="6">
    <location>
        <begin position="96"/>
        <end position="124"/>
    </location>
</feature>
<feature type="region of interest" description="Ribosome-binding" evidence="6">
    <location>
        <begin position="109"/>
        <end position="123"/>
    </location>
</feature>
<feature type="region of interest" description="Interaction with spike glycoprotein E2" evidence="3">
    <location>
        <begin position="165"/>
        <end position="170"/>
    </location>
</feature>
<feature type="region of interest" description="Dimerization of the capsid protein" evidence="5">
    <location>
        <begin position="193"/>
        <end position="203"/>
    </location>
</feature>
<feature type="region of interest" description="Dimerization of the capsid protein" evidence="5">
    <location>
        <begin position="229"/>
        <end position="233"/>
    </location>
</feature>
<feature type="region of interest" description="Functions as an uncleaved signal peptide for the precursor of protein E3/E2" evidence="2">
    <location>
        <begin position="272"/>
        <end position="284"/>
    </location>
</feature>
<feature type="region of interest" description="Interaction with host Mxra8 receptor" evidence="12">
    <location>
        <begin position="363"/>
        <end position="366"/>
    </location>
</feature>
<feature type="region of interest" description="Interaction with host Mxra8 receptor" evidence="12">
    <location>
        <begin position="399"/>
        <end position="401"/>
    </location>
</feature>
<feature type="region of interest" description="Interaction with host Mxra8 receptor" evidence="12">
    <location>
        <begin position="521"/>
        <end position="524"/>
    </location>
</feature>
<feature type="region of interest" description="Interaction with host Mxra8 receptor" evidence="12">
    <location>
        <begin position="553"/>
        <end position="559"/>
    </location>
</feature>
<feature type="region of interest" description="Interaction with the capsid protein" evidence="3">
    <location>
        <begin position="726"/>
        <end position="730"/>
    </location>
</feature>
<feature type="region of interest" description="Transient transmembrane before p62-6K protein processing" evidence="13">
    <location>
        <begin position="731"/>
        <end position="751"/>
    </location>
</feature>
<feature type="region of interest" description="E1 fusion peptide loop" evidence="11">
    <location>
        <begin position="903"/>
        <end position="920"/>
    </location>
</feature>
<feature type="short sequence motif" description="Nuclear localization signal" evidence="4">
    <location>
        <begin position="68"/>
        <end position="109"/>
    </location>
</feature>
<feature type="short sequence motif" description="Nuclear export signal" evidence="4">
    <location>
        <begin position="154"/>
        <end position="164"/>
    </location>
</feature>
<feature type="compositionally biased region" description="Basic residues" evidence="15">
    <location>
        <begin position="69"/>
        <end position="84"/>
    </location>
</feature>
<feature type="compositionally biased region" description="Basic residues" evidence="15">
    <location>
        <begin position="93"/>
        <end position="114"/>
    </location>
</feature>
<feature type="active site" description="Charge relay system" evidence="14">
    <location>
        <position position="149"/>
    </location>
</feature>
<feature type="active site" description="Charge relay system" evidence="14">
    <location>
        <position position="171"/>
    </location>
</feature>
<feature type="active site" description="Charge relay system" evidence="14">
    <location>
        <position position="223"/>
    </location>
</feature>
<feature type="site" description="Involved in dimerization of the capsid protein" evidence="10">
    <location>
        <position position="197"/>
    </location>
</feature>
<feature type="site" description="Involved in dimerization of the capsid protein" evidence="10">
    <location>
        <position position="230"/>
    </location>
</feature>
<feature type="site" description="Cleavage; by autolysis" evidence="2">
    <location>
        <begin position="271"/>
        <end position="272"/>
    </location>
</feature>
<feature type="site" description="Cleavage; by host furin" evidence="2">
    <location>
        <begin position="337"/>
        <end position="338"/>
    </location>
</feature>
<feature type="site" description="Cleavage; by host signal peptidase" evidence="2">
    <location>
        <begin position="758"/>
        <end position="759"/>
    </location>
</feature>
<feature type="site" description="Cleavage; by host signal peptidase" evidence="2">
    <location>
        <begin position="819"/>
        <end position="820"/>
    </location>
</feature>
<feature type="lipid moiety-binding region" description="S-palmitoyl cysteine; by host" evidence="3">
    <location>
        <position position="731"/>
    </location>
</feature>
<feature type="lipid moiety-binding region" description="S-palmitoyl cysteine; by host" evidence="9">
    <location>
        <position position="751"/>
    </location>
</feature>
<feature type="lipid moiety-binding region" description="S-palmitoyl cysteine; by host" evidence="9">
    <location>
        <position position="752"/>
    </location>
</feature>
<feature type="lipid moiety-binding region" description="S-palmitoyl cysteine; by host" evidence="9">
    <location>
        <position position="1252"/>
    </location>
</feature>
<feature type="glycosylation site" description="N-linked (GlcNAc...) asparagine; by host" evidence="13">
    <location>
        <position position="283"/>
    </location>
</feature>
<feature type="glycosylation site" description="N-linked (GlcNAc...) asparagine; by host" evidence="9">
    <location>
        <position position="537"/>
    </location>
</feature>
<feature type="glycosylation site" description="N-linked (GlcNAc...) asparagine; by host" evidence="9">
    <location>
        <position position="598"/>
    </location>
</feature>
<feature type="glycosylation site" description="N-linked (GlcNAc...) asparagine; by host" evidence="9">
    <location>
        <position position="960"/>
    </location>
</feature>
<feature type="glycosylation site" description="N-linked (GlcNAc...) asparagine; by host" evidence="9">
    <location>
        <position position="1089"/>
    </location>
</feature>
<feature type="disulfide bond" evidence="2">
    <location>
        <begin position="123"/>
        <end position="138"/>
    </location>
</feature>
<feature type="disulfide bond" evidence="8">
    <location>
        <begin position="279"/>
        <end position="288"/>
    </location>
</feature>
<feature type="disulfide bond" evidence="8">
    <location>
        <begin position="293"/>
        <end position="297"/>
    </location>
</feature>
<feature type="disulfide bond" evidence="8">
    <location>
        <begin position="296"/>
        <end position="328"/>
    </location>
</feature>
<feature type="disulfide bond" evidence="7">
    <location>
        <begin position="356"/>
        <end position="462"/>
    </location>
</feature>
<feature type="disulfide bond" evidence="7">
    <location>
        <begin position="359"/>
        <end position="365"/>
    </location>
</feature>
<feature type="disulfide bond" evidence="7">
    <location>
        <begin position="428"/>
        <end position="442"/>
    </location>
</feature>
<feature type="disulfide bond" evidence="8">
    <location>
        <begin position="490"/>
        <end position="601"/>
    </location>
</feature>
<feature type="disulfide bond" evidence="8">
    <location>
        <begin position="538"/>
        <end position="562"/>
    </location>
</feature>
<feature type="disulfide bond" evidence="8">
    <location>
        <begin position="540"/>
        <end position="557"/>
    </location>
</feature>
<feature type="disulfide bond" evidence="8">
    <location>
        <begin position="731"/>
        <end position="752"/>
    </location>
</feature>
<feature type="disulfide bond" evidence="9">
    <location>
        <begin position="868"/>
        <end position="933"/>
    </location>
</feature>
<feature type="disulfide bond" evidence="9">
    <location>
        <begin position="881"/>
        <end position="913"/>
    </location>
</feature>
<feature type="disulfide bond" evidence="9">
    <location>
        <begin position="882"/>
        <end position="915"/>
    </location>
</feature>
<feature type="disulfide bond" evidence="2">
    <location>
        <begin position="887"/>
        <end position="897"/>
    </location>
</feature>
<feature type="disulfide bond" evidence="9">
    <location>
        <begin position="1078"/>
        <end position="1090"/>
    </location>
</feature>
<feature type="disulfide bond" evidence="9">
    <location>
        <begin position="1120"/>
        <end position="1195"/>
    </location>
</feature>
<feature type="disulfide bond" evidence="9">
    <location>
        <begin position="1125"/>
        <end position="1199"/>
    </location>
</feature>
<feature type="disulfide bond" evidence="9">
    <location>
        <begin position="1147"/>
        <end position="1189"/>
    </location>
</feature>
<proteinExistence type="inferred from homology"/>